<protein>
    <recommendedName>
        <fullName evidence="2">Small ribosomal subunit protein uS12cz/uS12cy</fullName>
    </recommendedName>
    <alternativeName>
        <fullName evidence="3">30S ribosomal protein S12, chloroplastic</fullName>
    </alternativeName>
</protein>
<organism>
    <name type="scientific">Lactuca sativa</name>
    <name type="common">Garden lettuce</name>
    <dbReference type="NCBI Taxonomy" id="4236"/>
    <lineage>
        <taxon>Eukaryota</taxon>
        <taxon>Viridiplantae</taxon>
        <taxon>Streptophyta</taxon>
        <taxon>Embryophyta</taxon>
        <taxon>Tracheophyta</taxon>
        <taxon>Spermatophyta</taxon>
        <taxon>Magnoliopsida</taxon>
        <taxon>eudicotyledons</taxon>
        <taxon>Gunneridae</taxon>
        <taxon>Pentapetalae</taxon>
        <taxon>asterids</taxon>
        <taxon>campanulids</taxon>
        <taxon>Asterales</taxon>
        <taxon>Asteraceae</taxon>
        <taxon>Cichorioideae</taxon>
        <taxon>Cichorieae</taxon>
        <taxon>Lactucinae</taxon>
        <taxon>Lactuca</taxon>
    </lineage>
</organism>
<sequence>MPTIKQLIRNTRQPIRNVTKSPALRGCPQRRGTCTRVYTITPKKPNSALRKVARVRLTSGFEITAYIPGIGHNSQEHSVVLVRGGRVKDLPGVRYHIVRGTLDAVGVKDRQQGRSSAL</sequence>
<gene>
    <name type="primary">rps12-A</name>
</gene>
<gene>
    <name type="primary">rps12-B</name>
</gene>
<reference key="1">
    <citation type="journal article" date="2006" name="Transgenic Res.">
        <title>Efficient and stable transformation of Lactuca sativa L. cv. Cisco (lettuce) plastids.</title>
        <authorList>
            <person name="Kanamoto H."/>
            <person name="Yamashita A."/>
            <person name="Asao H."/>
            <person name="Okumura S."/>
            <person name="Takase H."/>
            <person name="Hattori M."/>
            <person name="Yokota A."/>
            <person name="Tomizawa K."/>
        </authorList>
    </citation>
    <scope>NUCLEOTIDE SEQUENCE [LARGE SCALE GENOMIC DNA]</scope>
    <source>
        <strain>cv. Cisco</strain>
    </source>
</reference>
<reference key="2">
    <citation type="submission" date="2006-01" db="EMBL/GenBank/DDBJ databases">
        <title>A comparison of the first two published chloroplast genomes in Asteraceae: Lactuca and Helianthus.</title>
        <authorList>
            <person name="Timme R.E."/>
            <person name="Kuehl J.V."/>
            <person name="Boore J.L."/>
            <person name="Jansen R.K."/>
        </authorList>
    </citation>
    <scope>NUCLEOTIDE SEQUENCE [LARGE SCALE GENOMIC DNA]</scope>
    <source>
        <strain>cv. Salinas</strain>
    </source>
</reference>
<feature type="chain" id="PRO_0000276616" description="Small ribosomal subunit protein uS12cz/uS12cy">
    <location>
        <begin position="1"/>
        <end position="118"/>
    </location>
</feature>
<proteinExistence type="inferred from homology"/>
<accession>Q332V3</accession>
<accession>Q1KXJ9</accession>
<dbReference type="EMBL" id="AP007232">
    <property type="protein sequence ID" value="BAE47618.1"/>
    <property type="molecule type" value="Genomic_DNA"/>
</dbReference>
<dbReference type="EMBL" id="AP007232">
    <property type="protein sequence ID" value="BAE47619.1"/>
    <property type="molecule type" value="Genomic_DNA"/>
</dbReference>
<dbReference type="EMBL" id="DQ383816">
    <property type="protein sequence ID" value="ABD47212.1"/>
    <property type="molecule type" value="Genomic_DNA"/>
</dbReference>
<dbReference type="EMBL" id="DQ383816">
    <property type="protein sequence ID" value="ABD47293.1"/>
    <property type="status" value="ALT_SEQ"/>
    <property type="molecule type" value="Genomic_DNA"/>
</dbReference>
<dbReference type="SMR" id="Q332V3"/>
<dbReference type="KEGG" id="lsv:3772815"/>
<dbReference type="KEGG" id="lsv:3772827"/>
<dbReference type="OrthoDB" id="414309at2759"/>
<dbReference type="GO" id="GO:0009507">
    <property type="term" value="C:chloroplast"/>
    <property type="evidence" value="ECO:0007669"/>
    <property type="project" value="UniProtKB-SubCell"/>
</dbReference>
<dbReference type="GO" id="GO:0015935">
    <property type="term" value="C:small ribosomal subunit"/>
    <property type="evidence" value="ECO:0007669"/>
    <property type="project" value="InterPro"/>
</dbReference>
<dbReference type="GO" id="GO:0019843">
    <property type="term" value="F:rRNA binding"/>
    <property type="evidence" value="ECO:0007669"/>
    <property type="project" value="UniProtKB-UniRule"/>
</dbReference>
<dbReference type="GO" id="GO:0003735">
    <property type="term" value="F:structural constituent of ribosome"/>
    <property type="evidence" value="ECO:0007669"/>
    <property type="project" value="InterPro"/>
</dbReference>
<dbReference type="GO" id="GO:0006412">
    <property type="term" value="P:translation"/>
    <property type="evidence" value="ECO:0007669"/>
    <property type="project" value="UniProtKB-UniRule"/>
</dbReference>
<dbReference type="CDD" id="cd03368">
    <property type="entry name" value="Ribosomal_S12"/>
    <property type="match status" value="1"/>
</dbReference>
<dbReference type="FunFam" id="2.40.50.140:FF:000008">
    <property type="entry name" value="30S ribosomal protein S12, chloroplastic"/>
    <property type="match status" value="1"/>
</dbReference>
<dbReference type="Gene3D" id="2.40.50.140">
    <property type="entry name" value="Nucleic acid-binding proteins"/>
    <property type="match status" value="1"/>
</dbReference>
<dbReference type="HAMAP" id="MF_00403_B">
    <property type="entry name" value="Ribosomal_uS12_B"/>
    <property type="match status" value="1"/>
</dbReference>
<dbReference type="InterPro" id="IPR012340">
    <property type="entry name" value="NA-bd_OB-fold"/>
</dbReference>
<dbReference type="InterPro" id="IPR006032">
    <property type="entry name" value="Ribosomal_uS12"/>
</dbReference>
<dbReference type="InterPro" id="IPR005679">
    <property type="entry name" value="Ribosomal_uS12_bac"/>
</dbReference>
<dbReference type="NCBIfam" id="TIGR00981">
    <property type="entry name" value="rpsL_bact"/>
    <property type="match status" value="1"/>
</dbReference>
<dbReference type="PANTHER" id="PTHR11652">
    <property type="entry name" value="30S RIBOSOMAL PROTEIN S12 FAMILY MEMBER"/>
    <property type="match status" value="1"/>
</dbReference>
<dbReference type="Pfam" id="PF00164">
    <property type="entry name" value="Ribosom_S12_S23"/>
    <property type="match status" value="1"/>
</dbReference>
<dbReference type="PIRSF" id="PIRSF002133">
    <property type="entry name" value="Ribosomal_S12/S23"/>
    <property type="match status" value="1"/>
</dbReference>
<dbReference type="PRINTS" id="PR01034">
    <property type="entry name" value="RIBOSOMALS12"/>
</dbReference>
<dbReference type="SUPFAM" id="SSF50249">
    <property type="entry name" value="Nucleic acid-binding proteins"/>
    <property type="match status" value="1"/>
</dbReference>
<dbReference type="PROSITE" id="PS00055">
    <property type="entry name" value="RIBOSOMAL_S12"/>
    <property type="match status" value="1"/>
</dbReference>
<name>RR12_LACSA</name>
<evidence type="ECO:0000250" key="1"/>
<evidence type="ECO:0000255" key="2">
    <source>
        <dbReference type="HAMAP-Rule" id="MF_00403"/>
    </source>
</evidence>
<evidence type="ECO:0000305" key="3"/>
<geneLocation type="chloroplast"/>
<keyword id="KW-0150">Chloroplast</keyword>
<keyword id="KW-0934">Plastid</keyword>
<keyword id="KW-0687">Ribonucleoprotein</keyword>
<keyword id="KW-0689">Ribosomal protein</keyword>
<keyword id="KW-0694">RNA-binding</keyword>
<keyword id="KW-0699">rRNA-binding</keyword>
<comment type="function">
    <text evidence="1">With S4 and S5 plays an important role in translational accuracy. Located at the interface of the 30S and 50S subunits (By similarity).</text>
</comment>
<comment type="subunit">
    <text evidence="1">Part of the 30S ribosomal subunit.</text>
</comment>
<comment type="subcellular location">
    <subcellularLocation>
        <location>Plastid</location>
        <location>Chloroplast</location>
    </subcellularLocation>
</comment>
<comment type="similarity">
    <text evidence="3">Belongs to the universal ribosomal protein uS12 family.</text>
</comment>
<comment type="sequence caution" evidence="3">
    <conflict type="erroneous gene model prediction">
        <sequence resource="EMBL-CDS" id="ABD47293"/>
    </conflict>
</comment>